<feature type="chain" id="PRO_1000213535" description="UPF0284 protein TGAM_0534">
    <location>
        <begin position="1"/>
        <end position="333"/>
    </location>
</feature>
<organism>
    <name type="scientific">Thermococcus gammatolerans (strain DSM 15229 / JCM 11827 / EJ3)</name>
    <dbReference type="NCBI Taxonomy" id="593117"/>
    <lineage>
        <taxon>Archaea</taxon>
        <taxon>Methanobacteriati</taxon>
        <taxon>Methanobacteriota</taxon>
        <taxon>Thermococci</taxon>
        <taxon>Thermococcales</taxon>
        <taxon>Thermococcaceae</taxon>
        <taxon>Thermococcus</taxon>
    </lineage>
</organism>
<gene>
    <name type="ordered locus">TGAM_0534</name>
</gene>
<keyword id="KW-1185">Reference proteome</keyword>
<reference key="1">
    <citation type="journal article" date="2007" name="Genome Biol.">
        <title>Genome analysis and genome-wide proteomics of Thermococcus gammatolerans, the most radioresistant organism known amongst the Archaea.</title>
        <authorList>
            <person name="Zivanovic Y."/>
            <person name="Armengaud J."/>
            <person name="Lagorce A."/>
            <person name="Leplat C."/>
            <person name="Guerin P."/>
            <person name="Dutertre M."/>
            <person name="Anthouard V."/>
            <person name="Forterre P."/>
            <person name="Wincker P."/>
            <person name="Confalonieri F."/>
        </authorList>
    </citation>
    <scope>NUCLEOTIDE SEQUENCE [LARGE SCALE GENOMIC DNA]</scope>
    <source>
        <strain>DSM 15229 / JCM 11827 / EJ3</strain>
    </source>
</reference>
<evidence type="ECO:0000255" key="1">
    <source>
        <dbReference type="HAMAP-Rule" id="MF_01086"/>
    </source>
</evidence>
<comment type="similarity">
    <text evidence="1">Belongs to the UPF0284 family.</text>
</comment>
<proteinExistence type="inferred from homology"/>
<dbReference type="EMBL" id="CP001398">
    <property type="protein sequence ID" value="ACS33036.1"/>
    <property type="molecule type" value="Genomic_DNA"/>
</dbReference>
<dbReference type="RefSeq" id="WP_015858154.1">
    <property type="nucleotide sequence ID" value="NC_012804.1"/>
</dbReference>
<dbReference type="SMR" id="C5A474"/>
<dbReference type="STRING" id="593117.TGAM_0534"/>
<dbReference type="PaxDb" id="593117-TGAM_0534"/>
<dbReference type="GeneID" id="7987402"/>
<dbReference type="KEGG" id="tga:TGAM_0534"/>
<dbReference type="PATRIC" id="fig|593117.10.peg.530"/>
<dbReference type="eggNOG" id="arCOG04272">
    <property type="taxonomic scope" value="Archaea"/>
</dbReference>
<dbReference type="HOGENOM" id="CLU_053134_0_0_2"/>
<dbReference type="OrthoDB" id="9136at2157"/>
<dbReference type="Proteomes" id="UP000001488">
    <property type="component" value="Chromosome"/>
</dbReference>
<dbReference type="GO" id="GO:0008939">
    <property type="term" value="F:nicotinate-nucleotide-dimethylbenzimidazole phosphoribosyltransferase activity"/>
    <property type="evidence" value="ECO:0007669"/>
    <property type="project" value="InterPro"/>
</dbReference>
<dbReference type="CDD" id="cd02439">
    <property type="entry name" value="DMB-PRT_CobT"/>
    <property type="match status" value="1"/>
</dbReference>
<dbReference type="Gene3D" id="3.40.50.10210">
    <property type="match status" value="1"/>
</dbReference>
<dbReference type="HAMAP" id="MF_01086">
    <property type="entry name" value="UPF0284"/>
    <property type="match status" value="1"/>
</dbReference>
<dbReference type="InterPro" id="IPR003200">
    <property type="entry name" value="Nict_dMeBzImd_PRibTrfase"/>
</dbReference>
<dbReference type="InterPro" id="IPR002805">
    <property type="entry name" value="Nict_dMeBzImd_PRibTrfase_arc"/>
</dbReference>
<dbReference type="InterPro" id="IPR036087">
    <property type="entry name" value="Nict_dMeBzImd_PRibTrfase_sf"/>
</dbReference>
<dbReference type="NCBIfam" id="TIGR00303">
    <property type="entry name" value="nicotinate mononucleotide-dependent phosphoribosyltransferase CobT"/>
    <property type="match status" value="1"/>
</dbReference>
<dbReference type="NCBIfam" id="NF003368">
    <property type="entry name" value="PRK04447.1-1"/>
    <property type="match status" value="1"/>
</dbReference>
<dbReference type="NCBIfam" id="NF003372">
    <property type="entry name" value="PRK04447.1-5"/>
    <property type="match status" value="1"/>
</dbReference>
<dbReference type="PANTHER" id="PTHR38811">
    <property type="match status" value="1"/>
</dbReference>
<dbReference type="PANTHER" id="PTHR38811:SF1">
    <property type="entry name" value="UPF0284 PROTEIN SLL1500"/>
    <property type="match status" value="1"/>
</dbReference>
<dbReference type="Pfam" id="PF02277">
    <property type="entry name" value="DBI_PRT"/>
    <property type="match status" value="1"/>
</dbReference>
<dbReference type="SUPFAM" id="SSF52733">
    <property type="entry name" value="Nicotinate mononucleotide:5,6-dimethylbenzimidazole phosphoribosyltransferase (CobT)"/>
    <property type="match status" value="1"/>
</dbReference>
<protein>
    <recommendedName>
        <fullName evidence="1">UPF0284 protein TGAM_0534</fullName>
    </recommendedName>
</protein>
<sequence>MESLFLLVLGNTEISTVPGISVAGATPELTKLTPVADAEYLFHEKPLTIDVIPVTPEGHPTPAIITKAARELANFPVLVVRGGTYLAPLVPHVHISDAVGRDFRKEPALPEFGDIIKRAKLFGEELNKTPIKELVIGESTPGGTTTAQAVLWALGYEARTSSASPDNPQSLKEKVIAEAFERAGIEKGQLRDNPLEALRQFGDPMMATVIGIALGFRRDIVLAGGTQMLAVSALLKALGEDLSRFMIATTKWVANDKSATFIETAKEIGIISYAADLDFSKSEFKGLRDYERGYVKEGVGAGGATWLAVKAGFSPEDVSEKVEELYRRLMEMK</sequence>
<accession>C5A474</accession>
<name>Y534_THEGJ</name>